<name>DPOL_DHBVQ</name>
<keyword id="KW-0235">DNA replication</keyword>
<keyword id="KW-0238">DNA-binding</keyword>
<keyword id="KW-0239">DNA-directed DNA polymerase</keyword>
<keyword id="KW-0255">Endonuclease</keyword>
<keyword id="KW-0378">Hydrolase</keyword>
<keyword id="KW-0460">Magnesium</keyword>
<keyword id="KW-0479">Metal-binding</keyword>
<keyword id="KW-0511">Multifunctional enzyme</keyword>
<keyword id="KW-0540">Nuclease</keyword>
<keyword id="KW-0548">Nucleotidyltransferase</keyword>
<keyword id="KW-1185">Reference proteome</keyword>
<keyword id="KW-0695">RNA-directed DNA polymerase</keyword>
<keyword id="KW-0808">Transferase</keyword>
<comment type="function">
    <text evidence="1">Multifunctional enzyme that converts the viral RNA genome into dsDNA in viral cytoplasmic capsids. This enzyme displays a DNA polymerase activity that can copy either DNA or RNA templates, and a ribonuclease H (RNase H) activity that cleaves the RNA strand of RNA-DNA heteroduplexes in a partially processive 3'- to 5'-endonucleasic mode. Neo-synthesized pregenomic RNA (pgRNA) are encapsidated together with the P protein, and reverse-transcribed inside the nucleocapsid. Initiation of reverse-transcription occurs first by binding the epsilon loop on the pgRNA genome, and is initiated by protein priming, thereby the 5'-end of (-)DNA is covalently linked to P protein. Partial (+)DNA is synthesized from the (-)DNA template and generates the relaxed circular DNA (RC-DNA) genome. After budding and infection, the RC-DNA migrates in the nucleus, and is converted into a plasmid-like covalently closed circular DNA (cccDNA). The activity of P protein does not seem to be necessary for cccDNA generation, and is presumably released from (+)DNA by host nuclear DNA repair machinery (By similarity).</text>
</comment>
<comment type="catalytic activity">
    <reaction evidence="2">
        <text>DNA(n) + a 2'-deoxyribonucleoside 5'-triphosphate = DNA(n+1) + diphosphate</text>
        <dbReference type="Rhea" id="RHEA:22508"/>
        <dbReference type="Rhea" id="RHEA-COMP:17339"/>
        <dbReference type="Rhea" id="RHEA-COMP:17340"/>
        <dbReference type="ChEBI" id="CHEBI:33019"/>
        <dbReference type="ChEBI" id="CHEBI:61560"/>
        <dbReference type="ChEBI" id="CHEBI:173112"/>
        <dbReference type="EC" id="2.7.7.7"/>
    </reaction>
</comment>
<comment type="catalytic activity">
    <reaction evidence="2">
        <text>DNA(n) + a 2'-deoxyribonucleoside 5'-triphosphate = DNA(n+1) + diphosphate</text>
        <dbReference type="Rhea" id="RHEA:22508"/>
        <dbReference type="Rhea" id="RHEA-COMP:17339"/>
        <dbReference type="Rhea" id="RHEA-COMP:17340"/>
        <dbReference type="ChEBI" id="CHEBI:33019"/>
        <dbReference type="ChEBI" id="CHEBI:61560"/>
        <dbReference type="ChEBI" id="CHEBI:173112"/>
        <dbReference type="EC" id="2.7.7.49"/>
    </reaction>
</comment>
<comment type="catalytic activity">
    <reaction>
        <text>Endonucleolytic cleavage to 5'-phosphomonoester.</text>
        <dbReference type="EC" id="3.1.26.4"/>
    </reaction>
</comment>
<comment type="domain">
    <text evidence="1">Terminal protein domain (TP) is hepadnavirus-specific. Spacer domain is highly variable and separates the TP and RT domains. Polymerase/reverse-transcriptase domain (RT) and ribonuclease H domain (RH) are similar to retrovirus reverse transcriptase/RNase H (By similarity).</text>
</comment>
<comment type="domain">
    <text evidence="1">The polymerase/reverse transcriptase (RT) and ribonuclease H (RH) domains are structured in five subdomains: finger, palm, thumb, connection and RNase H. Within the palm subdomain, the 'primer grip' region is thought to be involved in the positioning of the primer terminus for accommodating the incoming nucleotide. The RH domain stabilizes the association of RT with primer-template (By similarity).</text>
</comment>
<comment type="similarity">
    <text evidence="4">Belongs to the hepadnaviridae P protein family.</text>
</comment>
<sequence>MPQPLKQSLDQSKRLREAEKHLRELENLVDSNLEEEKLKPQLSMGEDVQSPGKGEPLHPNVRAPLSHVVRAATIDLPRLGNKLPAKHHLGKLSGLYQMKGCTFNPEWKVPDISDTHFDLQVVNECPSRNWKYLTPAKFWPKSISYFPVQAGVKAKYPDNVMQHEAIVGKYLNRLYEAGILYKRISKHLVTFKGKPYNWELQYLVKQHQVPDGTTTSKINGRAENRRRRAPAKSISRPHDSERDCNMVGQISNNRSSIRPCANNGGGKHSSTTGRLACWGGKTIGTDQSYSSRDASASVDSRGRSKSSRGFSSISRRKATGNHHHCSYVTNSVEATTRGRSTPGKQVFTRDSSSLPESRASRACDKDSSPQEEENAWYLRGNTSWPNRITGKLFLVDKNSRNTTEARLVVDFSQFSKGKNAMRFPRYWSPNLSTLRRILPVGMPRISLDLSQAFYHLPLNPASSSRLAVSDGQHVYYFRKAPMGVGLSPFLLHLFTTALGSEIARRFNVWTFTYMDDFLLCHPNARHLNSISHAVCSFLQELGIRINFDKTTPSPVNDIRFLGYQIDQKFMKIEESRWIELRTVIKKIKIGAWYDWKCIQRFVGHLNFVLPFTKGNIEMLKPMYAAITNKVNFSFSSAYRTLLYKLTMGVCKLAIRPKSSVPLPRVATDATPTHGAISHITGGSAVFAFSKVRDIHIQELLMVCLAKIMIKPRCILSDSTFVCHKRYQTLPWHFAMLAKQLLSPIQLYFVPSKYNPADGPSRHRPPDWTALTYTPLSKAIYIPHRLCGT</sequence>
<evidence type="ECO:0000250" key="1"/>
<evidence type="ECO:0000255" key="2">
    <source>
        <dbReference type="PROSITE-ProRule" id="PRU00405"/>
    </source>
</evidence>
<evidence type="ECO:0000256" key="3">
    <source>
        <dbReference type="SAM" id="MobiDB-lite"/>
    </source>
</evidence>
<evidence type="ECO:0000305" key="4"/>
<accession>Q66403</accession>
<accession>Q66402</accession>
<organism>
    <name type="scientific">Duck hepatitis B virus (isolate Shanghai/DHBVQCA34)</name>
    <name type="common">DHBV</name>
    <dbReference type="NCBI Taxonomy" id="644639"/>
    <lineage>
        <taxon>Viruses</taxon>
        <taxon>Riboviria</taxon>
        <taxon>Pararnavirae</taxon>
        <taxon>Artverviricota</taxon>
        <taxon>Revtraviricetes</taxon>
        <taxon>Blubervirales</taxon>
        <taxon>Hepadnaviridae</taxon>
        <taxon>Avihepadnavirus</taxon>
        <taxon>Duck hepatitis B virus</taxon>
    </lineage>
</organism>
<dbReference type="EC" id="2.7.7.7"/>
<dbReference type="EC" id="2.7.7.49"/>
<dbReference type="EC" id="3.1.26.4"/>
<dbReference type="EMBL" id="X60213">
    <property type="protein sequence ID" value="CAA42768.1"/>
    <property type="status" value="ALT_SEQ"/>
    <property type="molecule type" value="Genomic_DNA"/>
</dbReference>
<dbReference type="EMBL" id="X60213">
    <property type="protein sequence ID" value="CAA42769.1"/>
    <property type="molecule type" value="Genomic_DNA"/>
</dbReference>
<dbReference type="RefSeq" id="NP_039821.1">
    <property type="nucleotide sequence ID" value="NC_001344.1"/>
</dbReference>
<dbReference type="RefSeq" id="NP_039822.1">
    <property type="nucleotide sequence ID" value="NC_001344.1"/>
</dbReference>
<dbReference type="KEGG" id="vg:2546414"/>
<dbReference type="KEGG" id="vg:2546416"/>
<dbReference type="Proteomes" id="UP000009098">
    <property type="component" value="Segment"/>
</dbReference>
<dbReference type="GO" id="GO:0003677">
    <property type="term" value="F:DNA binding"/>
    <property type="evidence" value="ECO:0007669"/>
    <property type="project" value="UniProtKB-KW"/>
</dbReference>
<dbReference type="GO" id="GO:0003887">
    <property type="term" value="F:DNA-directed DNA polymerase activity"/>
    <property type="evidence" value="ECO:0007669"/>
    <property type="project" value="UniProtKB-KW"/>
</dbReference>
<dbReference type="GO" id="GO:0046872">
    <property type="term" value="F:metal ion binding"/>
    <property type="evidence" value="ECO:0007669"/>
    <property type="project" value="UniProtKB-KW"/>
</dbReference>
<dbReference type="GO" id="GO:0003964">
    <property type="term" value="F:RNA-directed DNA polymerase activity"/>
    <property type="evidence" value="ECO:0007669"/>
    <property type="project" value="UniProtKB-KW"/>
</dbReference>
<dbReference type="GO" id="GO:0004523">
    <property type="term" value="F:RNA-DNA hybrid ribonuclease activity"/>
    <property type="evidence" value="ECO:0007669"/>
    <property type="project" value="UniProtKB-EC"/>
</dbReference>
<dbReference type="GO" id="GO:0006260">
    <property type="term" value="P:DNA replication"/>
    <property type="evidence" value="ECO:0007669"/>
    <property type="project" value="UniProtKB-KW"/>
</dbReference>
<dbReference type="FunFam" id="3.30.70.270:FF:000058">
    <property type="entry name" value="Protein P"/>
    <property type="match status" value="1"/>
</dbReference>
<dbReference type="Gene3D" id="3.30.70.270">
    <property type="match status" value="1"/>
</dbReference>
<dbReference type="Gene3D" id="3.10.10.10">
    <property type="entry name" value="HIV Type 1 Reverse Transcriptase, subunit A, domain 1"/>
    <property type="match status" value="1"/>
</dbReference>
<dbReference type="InterPro" id="IPR043502">
    <property type="entry name" value="DNA/RNA_pol_sf"/>
</dbReference>
<dbReference type="InterPro" id="IPR001462">
    <property type="entry name" value="DNApol_viral_C"/>
</dbReference>
<dbReference type="InterPro" id="IPR000201">
    <property type="entry name" value="DNApol_viral_N"/>
</dbReference>
<dbReference type="InterPro" id="IPR052055">
    <property type="entry name" value="Hepadnavirus_pol/RT"/>
</dbReference>
<dbReference type="InterPro" id="IPR043128">
    <property type="entry name" value="Rev_trsase/Diguanyl_cyclase"/>
</dbReference>
<dbReference type="InterPro" id="IPR000477">
    <property type="entry name" value="RT_dom"/>
</dbReference>
<dbReference type="PANTHER" id="PTHR33050">
    <property type="entry name" value="REVERSE TRANSCRIPTASE DOMAIN-CONTAINING PROTEIN"/>
    <property type="match status" value="1"/>
</dbReference>
<dbReference type="PANTHER" id="PTHR33050:SF7">
    <property type="entry name" value="RIBONUCLEASE H"/>
    <property type="match status" value="1"/>
</dbReference>
<dbReference type="Pfam" id="PF00336">
    <property type="entry name" value="DNA_pol_viral_C"/>
    <property type="match status" value="1"/>
</dbReference>
<dbReference type="Pfam" id="PF00242">
    <property type="entry name" value="DNA_pol_viral_N"/>
    <property type="match status" value="1"/>
</dbReference>
<dbReference type="Pfam" id="PF00078">
    <property type="entry name" value="RVT_1"/>
    <property type="match status" value="1"/>
</dbReference>
<dbReference type="SUPFAM" id="SSF56672">
    <property type="entry name" value="DNA/RNA polymerases"/>
    <property type="match status" value="1"/>
</dbReference>
<dbReference type="PROSITE" id="PS50878">
    <property type="entry name" value="RT_POL"/>
    <property type="match status" value="1"/>
</dbReference>
<gene>
    <name type="primary">P</name>
</gene>
<proteinExistence type="inferred from homology"/>
<protein>
    <recommendedName>
        <fullName>Protein P</fullName>
    </recommendedName>
    <domain>
        <recommendedName>
            <fullName>DNA-directed DNA polymerase</fullName>
            <ecNumber>2.7.7.7</ecNumber>
        </recommendedName>
    </domain>
    <domain>
        <recommendedName>
            <fullName>RNA-directed DNA polymerase</fullName>
            <ecNumber>2.7.7.49</ecNumber>
        </recommendedName>
    </domain>
    <domain>
        <recommendedName>
            <fullName>Ribonuclease H</fullName>
            <ecNumber>3.1.26.4</ecNumber>
        </recommendedName>
    </domain>
</protein>
<reference key="1">
    <citation type="submission" date="1991-06" db="EMBL/GenBank/DDBJ databases">
        <title>Complete nucleotide sequence of a chinese Hepatitis B virus.</title>
        <authorList>
            <person name="Tong S."/>
            <person name="Mattes F."/>
            <person name="Blum H.E."/>
            <person name="Fernholz D."/>
            <person name="Schneider R."/>
            <person name="Will H."/>
        </authorList>
    </citation>
    <scope>NUCLEOTIDE SEQUENCE [GENOMIC DNA]</scope>
</reference>
<feature type="chain" id="PRO_0000397680" description="Protein P">
    <location>
        <begin position="1"/>
        <end position="788"/>
    </location>
</feature>
<feature type="domain" description="Reverse transcriptase" evidence="2">
    <location>
        <begin position="376"/>
        <end position="565"/>
    </location>
</feature>
<feature type="region of interest" description="Terminal protein domain (TP)" evidence="1">
    <location>
        <begin position="1"/>
        <end position="200"/>
    </location>
</feature>
<feature type="region of interest" description="Disordered" evidence="3">
    <location>
        <begin position="26"/>
        <end position="60"/>
    </location>
</feature>
<feature type="region of interest" description="Spacer" evidence="1">
    <location>
        <begin position="201"/>
        <end position="365"/>
    </location>
</feature>
<feature type="region of interest" description="Disordered" evidence="3">
    <location>
        <begin position="211"/>
        <end position="274"/>
    </location>
</feature>
<feature type="region of interest" description="Disordered" evidence="3">
    <location>
        <begin position="288"/>
        <end position="372"/>
    </location>
</feature>
<feature type="region of interest" description="Polymerase/reverse transcriptase domain (RT)" evidence="1">
    <location>
        <begin position="366"/>
        <end position="655"/>
    </location>
</feature>
<feature type="region of interest" description="RnaseH domain (RH)" evidence="1">
    <location>
        <begin position="656"/>
        <end position="788"/>
    </location>
</feature>
<feature type="compositionally biased region" description="Low complexity" evidence="3">
    <location>
        <begin position="288"/>
        <end position="299"/>
    </location>
</feature>
<feature type="compositionally biased region" description="Basic residues" evidence="3">
    <location>
        <begin position="314"/>
        <end position="325"/>
    </location>
</feature>
<feature type="compositionally biased region" description="Polar residues" evidence="3">
    <location>
        <begin position="327"/>
        <end position="355"/>
    </location>
</feature>
<feature type="compositionally biased region" description="Basic and acidic residues" evidence="3">
    <location>
        <begin position="358"/>
        <end position="368"/>
    </location>
</feature>
<feature type="binding site" evidence="2">
    <location>
        <position position="448"/>
    </location>
    <ligand>
        <name>Mg(2+)</name>
        <dbReference type="ChEBI" id="CHEBI:18420"/>
        <note>catalytic</note>
    </ligand>
</feature>
<feature type="binding site" evidence="2">
    <location>
        <position position="515"/>
    </location>
    <ligand>
        <name>Mg(2+)</name>
        <dbReference type="ChEBI" id="CHEBI:18420"/>
        <note>catalytic</note>
    </ligand>
</feature>
<feature type="binding site" evidence="2">
    <location>
        <position position="516"/>
    </location>
    <ligand>
        <name>Mg(2+)</name>
        <dbReference type="ChEBI" id="CHEBI:18420"/>
        <note>catalytic</note>
    </ligand>
</feature>
<feature type="site" description="Priming of reverse-transcription by covalently linking the first nucleotide of the (-)DNA" evidence="1">
    <location>
        <position position="96"/>
    </location>
</feature>
<organismHost>
    <name type="scientific">Anas</name>
    <name type="common">ducks</name>
    <dbReference type="NCBI Taxonomy" id="8835"/>
</organismHost>